<organism evidence="6">
    <name type="scientific">Clitoria ternatea</name>
    <name type="common">Butterfly pea</name>
    <dbReference type="NCBI Taxonomy" id="43366"/>
    <lineage>
        <taxon>Eukaryota</taxon>
        <taxon>Viridiplantae</taxon>
        <taxon>Streptophyta</taxon>
        <taxon>Embryophyta</taxon>
        <taxon>Tracheophyta</taxon>
        <taxon>Spermatophyta</taxon>
        <taxon>Magnoliopsida</taxon>
        <taxon>eudicotyledons</taxon>
        <taxon>Gunneridae</taxon>
        <taxon>Pentapetalae</taxon>
        <taxon>rosids</taxon>
        <taxon>fabids</taxon>
        <taxon>Fabales</taxon>
        <taxon>Fabaceae</taxon>
        <taxon>Papilionoideae</taxon>
        <taxon>50 kb inversion clade</taxon>
        <taxon>NPAAA clade</taxon>
        <taxon>indigoferoid/millettioid clade</taxon>
        <taxon>Phaseoleae</taxon>
        <taxon>Clitoria</taxon>
    </lineage>
</organism>
<reference evidence="6" key="1">
    <citation type="journal article" date="2011" name="J. Biol. Chem.">
        <title>Discovery and characterization of novel cyclotides originated from chimeric precursors consisting of albumin-1 chain a and cyclotide domains in the fabaceae family.</title>
        <authorList>
            <person name="Nguyen G.K."/>
            <person name="Zhang S."/>
            <person name="Nguyen N.T."/>
            <person name="Nguyen P.Q."/>
            <person name="Chiu M.S."/>
            <person name="Hardjojo A."/>
            <person name="Tam J.P."/>
        </authorList>
    </citation>
    <scope>NUCLEOTIDE SEQUENCE [MRNA]</scope>
    <scope>PROTEIN SEQUENCE OF 29-58</scope>
    <scope>FUNCTION</scope>
    <scope>PRESENCE OF DISULFIDE BONDS</scope>
    <scope>CYCLIZATION</scope>
    <scope>TISSUE SPECIFICITY</scope>
    <scope>MASS SPECTROMETRY</scope>
    <scope>IDENTIFICATION BY MASS SPECTROMETRY</scope>
</reference>
<protein>
    <recommendedName>
        <fullName>Cliotide T4</fullName>
    </recommendedName>
</protein>
<comment type="function">
    <text evidence="1 2 3">Probably participates in a plant defense mechanism (Probable). Active against Gram-negative bacteria E.coli ATCC 700926 (MIC=1.0 uM), K.pneumoniae ATTC 13883 (MIC=5.5 uM) and P.aeruginosa ATCC 39018 (MIC=7.5 uM) (PubMed:21596752). Has hemolytic and cytotoxic activity (PubMed:21596752).</text>
</comment>
<comment type="tissue specificity">
    <text evidence="3">Expressed in flower, stem, shoot, root, leaf, seed, pod and nodule (at protein level).</text>
</comment>
<comment type="domain">
    <text evidence="4">The presence of a 'disulfide through disulfide knot' structurally defines this protein as a knottin.</text>
</comment>
<comment type="PTM">
    <text evidence="3">Contains 3 disulfide bonds.</text>
</comment>
<comment type="PTM">
    <text evidence="2 3">This is a cyclic peptide.</text>
</comment>
<comment type="mass spectrometry"/>
<comment type="similarity">
    <text evidence="2">Belongs to the cyclotide family. Bracelet subfamily.</text>
</comment>
<evidence type="ECO:0000255" key="1"/>
<evidence type="ECO:0000255" key="2">
    <source>
        <dbReference type="PROSITE-ProRule" id="PRU00395"/>
    </source>
</evidence>
<evidence type="ECO:0000269" key="3">
    <source>
    </source>
</evidence>
<evidence type="ECO:0000305" key="4"/>
<evidence type="ECO:0000305" key="5">
    <source>
    </source>
</evidence>
<evidence type="ECO:0000312" key="6">
    <source>
        <dbReference type="EMBL" id="AEK26405.1"/>
    </source>
</evidence>
<feature type="signal peptide" evidence="3">
    <location>
        <begin position="1"/>
        <end position="28"/>
    </location>
</feature>
<feature type="peptide" id="PRO_0000440053" description="Cliotide T4" evidence="2 3">
    <location>
        <begin position="29"/>
        <end position="58"/>
    </location>
</feature>
<feature type="propeptide" id="PRO_0000440054" description="Removed in mature form" evidence="5">
    <location>
        <begin position="59"/>
        <end position="123"/>
    </location>
</feature>
<feature type="disulfide bond" evidence="2">
    <location>
        <begin position="32"/>
        <end position="48"/>
    </location>
</feature>
<feature type="disulfide bond" evidence="2">
    <location>
        <begin position="36"/>
        <end position="50"/>
    </location>
</feature>
<feature type="disulfide bond" evidence="2">
    <location>
        <begin position="41"/>
        <end position="55"/>
    </location>
</feature>
<feature type="cross-link" description="Cyclopeptide (Gly-Asn)" evidence="3">
    <location>
        <begin position="29"/>
        <end position="58"/>
    </location>
</feature>
<proteinExistence type="evidence at protein level"/>
<keyword id="KW-0044">Antibiotic</keyword>
<keyword id="KW-0929">Antimicrobial</keyword>
<keyword id="KW-0204">Cytolysis</keyword>
<keyword id="KW-0903">Direct protein sequencing</keyword>
<keyword id="KW-1015">Disulfide bond</keyword>
<keyword id="KW-0354">Hemolysis</keyword>
<keyword id="KW-0960">Knottin</keyword>
<keyword id="KW-0611">Plant defense</keyword>
<keyword id="KW-0732">Signal</keyword>
<accession>G1CWH3</accession>
<name>CYC4_CLITE</name>
<dbReference type="EMBL" id="JF931991">
    <property type="protein sequence ID" value="AEK26405.1"/>
    <property type="molecule type" value="mRNA"/>
</dbReference>
<dbReference type="GO" id="GO:0042742">
    <property type="term" value="P:defense response to bacterium"/>
    <property type="evidence" value="ECO:0007669"/>
    <property type="project" value="UniProtKB-KW"/>
</dbReference>
<dbReference type="GO" id="GO:0031640">
    <property type="term" value="P:killing of cells of another organism"/>
    <property type="evidence" value="ECO:0007669"/>
    <property type="project" value="UniProtKB-KW"/>
</dbReference>
<dbReference type="InterPro" id="IPR032000">
    <property type="entry name" value="Albumin_I_a"/>
</dbReference>
<dbReference type="InterPro" id="IPR005535">
    <property type="entry name" value="Cyclotide"/>
</dbReference>
<dbReference type="InterPro" id="IPR012323">
    <property type="entry name" value="Cyclotide_bracelet_CS"/>
</dbReference>
<dbReference type="InterPro" id="IPR036146">
    <property type="entry name" value="Cyclotide_sf"/>
</dbReference>
<dbReference type="Pfam" id="PF16720">
    <property type="entry name" value="Albumin_I_a"/>
    <property type="match status" value="1"/>
</dbReference>
<dbReference type="Pfam" id="PF03784">
    <property type="entry name" value="Cyclotide"/>
    <property type="match status" value="1"/>
</dbReference>
<dbReference type="SUPFAM" id="SSF57038">
    <property type="entry name" value="Cyclotides"/>
    <property type="match status" value="1"/>
</dbReference>
<dbReference type="PROSITE" id="PS51052">
    <property type="entry name" value="CYCLOTIDE"/>
    <property type="match status" value="1"/>
</dbReference>
<dbReference type="PROSITE" id="PS60008">
    <property type="entry name" value="CYCLOTIDE_BRACELET"/>
    <property type="match status" value="1"/>
</dbReference>
<sequence>MASLRIAPLALFFFLAASVMFTVEKTEAGIPCGESCVFIPCITAAIGCSCKSKVCYRNHVIAAEAKTMDDHHLLCQSHEDCITKGTGNFCAPFPDQDIKYGWCFRAESEGFLLKDHLKMSITN</sequence>